<dbReference type="EMBL" id="CP000038">
    <property type="protein sequence ID" value="AAZ87344.1"/>
    <property type="molecule type" value="Genomic_DNA"/>
</dbReference>
<dbReference type="RefSeq" id="WP_000939738.1">
    <property type="nucleotide sequence ID" value="NC_007384.1"/>
</dbReference>
<dbReference type="SMR" id="Q3Z4G8"/>
<dbReference type="GeneID" id="93776858"/>
<dbReference type="KEGG" id="ssn:SSON_0578"/>
<dbReference type="HOGENOM" id="CLU_114342_3_3_6"/>
<dbReference type="Proteomes" id="UP000002529">
    <property type="component" value="Chromosome"/>
</dbReference>
<dbReference type="GO" id="GO:0005886">
    <property type="term" value="C:plasma membrane"/>
    <property type="evidence" value="ECO:0007669"/>
    <property type="project" value="UniProtKB-SubCell"/>
</dbReference>
<dbReference type="GO" id="GO:0062054">
    <property type="term" value="F:fluoride channel activity"/>
    <property type="evidence" value="ECO:0007669"/>
    <property type="project" value="UniProtKB-UniRule"/>
</dbReference>
<dbReference type="GO" id="GO:0046872">
    <property type="term" value="F:metal ion binding"/>
    <property type="evidence" value="ECO:0007669"/>
    <property type="project" value="UniProtKB-KW"/>
</dbReference>
<dbReference type="GO" id="GO:0140114">
    <property type="term" value="P:cellular detoxification of fluoride"/>
    <property type="evidence" value="ECO:0007669"/>
    <property type="project" value="UniProtKB-UniRule"/>
</dbReference>
<dbReference type="HAMAP" id="MF_00454">
    <property type="entry name" value="FluC"/>
    <property type="match status" value="1"/>
</dbReference>
<dbReference type="InterPro" id="IPR003691">
    <property type="entry name" value="FluC"/>
</dbReference>
<dbReference type="NCBIfam" id="TIGR00494">
    <property type="entry name" value="crcB"/>
    <property type="match status" value="1"/>
</dbReference>
<dbReference type="NCBIfam" id="NF010792">
    <property type="entry name" value="PRK14196.1"/>
    <property type="match status" value="1"/>
</dbReference>
<dbReference type="PANTHER" id="PTHR28259">
    <property type="entry name" value="FLUORIDE EXPORT PROTEIN 1-RELATED"/>
    <property type="match status" value="1"/>
</dbReference>
<dbReference type="PANTHER" id="PTHR28259:SF1">
    <property type="entry name" value="FLUORIDE EXPORT PROTEIN 1-RELATED"/>
    <property type="match status" value="1"/>
</dbReference>
<dbReference type="Pfam" id="PF02537">
    <property type="entry name" value="CRCB"/>
    <property type="match status" value="1"/>
</dbReference>
<feature type="chain" id="PRO_0000252938" description="Fluoride-specific ion channel FluC">
    <location>
        <begin position="1"/>
        <end position="127"/>
    </location>
</feature>
<feature type="transmembrane region" description="Helical" evidence="1">
    <location>
        <begin position="4"/>
        <end position="24"/>
    </location>
</feature>
<feature type="transmembrane region" description="Helical" evidence="1">
    <location>
        <begin position="35"/>
        <end position="55"/>
    </location>
</feature>
<feature type="transmembrane region" description="Helical" evidence="1">
    <location>
        <begin position="71"/>
        <end position="91"/>
    </location>
</feature>
<feature type="transmembrane region" description="Helical" evidence="1">
    <location>
        <begin position="103"/>
        <end position="123"/>
    </location>
</feature>
<feature type="binding site" evidence="1">
    <location>
        <position position="75"/>
    </location>
    <ligand>
        <name>Na(+)</name>
        <dbReference type="ChEBI" id="CHEBI:29101"/>
        <note>structural</note>
    </ligand>
</feature>
<feature type="binding site" evidence="1">
    <location>
        <position position="78"/>
    </location>
    <ligand>
        <name>Na(+)</name>
        <dbReference type="ChEBI" id="CHEBI:29101"/>
        <note>structural</note>
    </ligand>
</feature>
<sequence length="127" mass="13765">MLQLLLAVFIGGGTGSVARWLLSMRFNPLHQAIPLGTLAANLIGAFIIGMGFAWFSRMTNIDPVWKVLITTGFCGGLTTFSTFSAEVVFLLQEGRFGWALLNVFVNLLGSFAMTALAFWLFSASTAH</sequence>
<proteinExistence type="inferred from homology"/>
<gene>
    <name evidence="1" type="primary">fluC</name>
    <name evidence="1" type="synonym">crcB</name>
    <name type="ordered locus">SSON_0578</name>
</gene>
<keyword id="KW-0997">Cell inner membrane</keyword>
<keyword id="KW-1003">Cell membrane</keyword>
<keyword id="KW-0407">Ion channel</keyword>
<keyword id="KW-0406">Ion transport</keyword>
<keyword id="KW-0472">Membrane</keyword>
<keyword id="KW-0479">Metal-binding</keyword>
<keyword id="KW-1185">Reference proteome</keyword>
<keyword id="KW-0915">Sodium</keyword>
<keyword id="KW-0812">Transmembrane</keyword>
<keyword id="KW-1133">Transmembrane helix</keyword>
<keyword id="KW-0813">Transport</keyword>
<accession>Q3Z4G8</accession>
<evidence type="ECO:0000255" key="1">
    <source>
        <dbReference type="HAMAP-Rule" id="MF_00454"/>
    </source>
</evidence>
<comment type="function">
    <text evidence="1">Fluoride-specific ion channel. Important for reducing fluoride concentration in the cell, thus reducing its toxicity.</text>
</comment>
<comment type="catalytic activity">
    <reaction evidence="1">
        <text>fluoride(in) = fluoride(out)</text>
        <dbReference type="Rhea" id="RHEA:76159"/>
        <dbReference type="ChEBI" id="CHEBI:17051"/>
    </reaction>
    <physiologicalReaction direction="left-to-right" evidence="1">
        <dbReference type="Rhea" id="RHEA:76160"/>
    </physiologicalReaction>
</comment>
<comment type="activity regulation">
    <text evidence="1">Na(+) is not transported, but it plays an essential structural role and its presence is essential for fluoride channel function.</text>
</comment>
<comment type="subcellular location">
    <subcellularLocation>
        <location evidence="1">Cell inner membrane</location>
        <topology evidence="1">Multi-pass membrane protein</topology>
    </subcellularLocation>
</comment>
<comment type="similarity">
    <text evidence="1">Belongs to the fluoride channel Fluc/FEX (TC 1.A.43) family.</text>
</comment>
<protein>
    <recommendedName>
        <fullName evidence="1">Fluoride-specific ion channel FluC</fullName>
    </recommendedName>
</protein>
<name>FLUC_SHISS</name>
<organism>
    <name type="scientific">Shigella sonnei (strain Ss046)</name>
    <dbReference type="NCBI Taxonomy" id="300269"/>
    <lineage>
        <taxon>Bacteria</taxon>
        <taxon>Pseudomonadati</taxon>
        <taxon>Pseudomonadota</taxon>
        <taxon>Gammaproteobacteria</taxon>
        <taxon>Enterobacterales</taxon>
        <taxon>Enterobacteriaceae</taxon>
        <taxon>Shigella</taxon>
    </lineage>
</organism>
<reference key="1">
    <citation type="journal article" date="2005" name="Nucleic Acids Res.">
        <title>Genome dynamics and diversity of Shigella species, the etiologic agents of bacillary dysentery.</title>
        <authorList>
            <person name="Yang F."/>
            <person name="Yang J."/>
            <person name="Zhang X."/>
            <person name="Chen L."/>
            <person name="Jiang Y."/>
            <person name="Yan Y."/>
            <person name="Tang X."/>
            <person name="Wang J."/>
            <person name="Xiong Z."/>
            <person name="Dong J."/>
            <person name="Xue Y."/>
            <person name="Zhu Y."/>
            <person name="Xu X."/>
            <person name="Sun L."/>
            <person name="Chen S."/>
            <person name="Nie H."/>
            <person name="Peng J."/>
            <person name="Xu J."/>
            <person name="Wang Y."/>
            <person name="Yuan Z."/>
            <person name="Wen Y."/>
            <person name="Yao Z."/>
            <person name="Shen Y."/>
            <person name="Qiang B."/>
            <person name="Hou Y."/>
            <person name="Yu J."/>
            <person name="Jin Q."/>
        </authorList>
    </citation>
    <scope>NUCLEOTIDE SEQUENCE [LARGE SCALE GENOMIC DNA]</scope>
    <source>
        <strain>Ss046</strain>
    </source>
</reference>